<name>COAX_POLSJ</name>
<reference key="1">
    <citation type="journal article" date="2008" name="Appl. Environ. Microbiol.">
        <title>The genome of Polaromonas sp. strain JS666: insights into the evolution of a hydrocarbon- and xenobiotic-degrading bacterium, and features of relevance to biotechnology.</title>
        <authorList>
            <person name="Mattes T.E."/>
            <person name="Alexander A.K."/>
            <person name="Richardson P.M."/>
            <person name="Munk A.C."/>
            <person name="Han C.S."/>
            <person name="Stothard P."/>
            <person name="Coleman N.V."/>
        </authorList>
    </citation>
    <scope>NUCLEOTIDE SEQUENCE [LARGE SCALE GENOMIC DNA]</scope>
    <source>
        <strain>JS666 / ATCC BAA-500</strain>
    </source>
</reference>
<comment type="function">
    <text evidence="1">Catalyzes the phosphorylation of pantothenate (Pan), the first step in CoA biosynthesis.</text>
</comment>
<comment type="catalytic activity">
    <reaction evidence="1">
        <text>(R)-pantothenate + ATP = (R)-4'-phosphopantothenate + ADP + H(+)</text>
        <dbReference type="Rhea" id="RHEA:16373"/>
        <dbReference type="ChEBI" id="CHEBI:10986"/>
        <dbReference type="ChEBI" id="CHEBI:15378"/>
        <dbReference type="ChEBI" id="CHEBI:29032"/>
        <dbReference type="ChEBI" id="CHEBI:30616"/>
        <dbReference type="ChEBI" id="CHEBI:456216"/>
        <dbReference type="EC" id="2.7.1.33"/>
    </reaction>
</comment>
<comment type="cofactor">
    <cofactor evidence="1">
        <name>NH4(+)</name>
        <dbReference type="ChEBI" id="CHEBI:28938"/>
    </cofactor>
    <cofactor evidence="1">
        <name>K(+)</name>
        <dbReference type="ChEBI" id="CHEBI:29103"/>
    </cofactor>
    <text evidence="1">A monovalent cation. Ammonium or potassium.</text>
</comment>
<comment type="pathway">
    <text evidence="1">Cofactor biosynthesis; coenzyme A biosynthesis; CoA from (R)-pantothenate: step 1/5.</text>
</comment>
<comment type="subunit">
    <text evidence="1">Homodimer.</text>
</comment>
<comment type="subcellular location">
    <subcellularLocation>
        <location evidence="1">Cytoplasm</location>
    </subcellularLocation>
</comment>
<comment type="similarity">
    <text evidence="1">Belongs to the type III pantothenate kinase family.</text>
</comment>
<sequence>MTFLALDVGNTRLKWAQYEAPAVGARLLAHGAVFLENIDRLAEEEWSEMSPPTRILGCIVAGDAIKRRVTEQMELWDVVPRWVVSSPQEAGLTNGYEHPARLGADRWVAMIGARHRLLARGISKPCIVVMVGTAVTVEAIDASGKFLGGIILPGHGIMLRALESGTAGLHVPTGEVRDFPTNTSDALTSGGTFAIAGAVQRMVENITRHCGEPPECIMTGGAGWKMAPSMSVKYELVDSLIFDGLLEIASRRFAP</sequence>
<feature type="chain" id="PRO_0000270888" description="Type III pantothenate kinase">
    <location>
        <begin position="1"/>
        <end position="255"/>
    </location>
</feature>
<feature type="active site" description="Proton acceptor" evidence="1">
    <location>
        <position position="105"/>
    </location>
</feature>
<feature type="binding site" evidence="1">
    <location>
        <begin position="7"/>
        <end position="14"/>
    </location>
    <ligand>
        <name>ATP</name>
        <dbReference type="ChEBI" id="CHEBI:30616"/>
    </ligand>
</feature>
<feature type="binding site" evidence="1">
    <location>
        <position position="96"/>
    </location>
    <ligand>
        <name>substrate</name>
    </ligand>
</feature>
<feature type="binding site" evidence="1">
    <location>
        <begin position="103"/>
        <end position="106"/>
    </location>
    <ligand>
        <name>substrate</name>
    </ligand>
</feature>
<feature type="binding site" evidence="1">
    <location>
        <position position="133"/>
    </location>
    <ligand>
        <name>ATP</name>
        <dbReference type="ChEBI" id="CHEBI:30616"/>
    </ligand>
</feature>
<feature type="binding site" evidence="1">
    <location>
        <position position="183"/>
    </location>
    <ligand>
        <name>substrate</name>
    </ligand>
</feature>
<accession>Q124V5</accession>
<evidence type="ECO:0000255" key="1">
    <source>
        <dbReference type="HAMAP-Rule" id="MF_01274"/>
    </source>
</evidence>
<protein>
    <recommendedName>
        <fullName evidence="1">Type III pantothenate kinase</fullName>
        <ecNumber evidence="1">2.7.1.33</ecNumber>
    </recommendedName>
    <alternativeName>
        <fullName evidence="1">PanK-III</fullName>
    </alternativeName>
    <alternativeName>
        <fullName evidence="1">Pantothenic acid kinase</fullName>
    </alternativeName>
</protein>
<keyword id="KW-0067">ATP-binding</keyword>
<keyword id="KW-0173">Coenzyme A biosynthesis</keyword>
<keyword id="KW-0963">Cytoplasm</keyword>
<keyword id="KW-0418">Kinase</keyword>
<keyword id="KW-0547">Nucleotide-binding</keyword>
<keyword id="KW-0630">Potassium</keyword>
<keyword id="KW-1185">Reference proteome</keyword>
<keyword id="KW-0808">Transferase</keyword>
<dbReference type="EC" id="2.7.1.33" evidence="1"/>
<dbReference type="EMBL" id="CP000316">
    <property type="protein sequence ID" value="ABE45937.1"/>
    <property type="molecule type" value="Genomic_DNA"/>
</dbReference>
<dbReference type="RefSeq" id="WP_011484927.1">
    <property type="nucleotide sequence ID" value="NC_007948.1"/>
</dbReference>
<dbReference type="SMR" id="Q124V5"/>
<dbReference type="STRING" id="296591.Bpro_4044"/>
<dbReference type="KEGG" id="pol:Bpro_4044"/>
<dbReference type="eggNOG" id="COG1521">
    <property type="taxonomic scope" value="Bacteria"/>
</dbReference>
<dbReference type="HOGENOM" id="CLU_066627_0_0_4"/>
<dbReference type="OrthoDB" id="9781305at2"/>
<dbReference type="UniPathway" id="UPA00241">
    <property type="reaction ID" value="UER00352"/>
</dbReference>
<dbReference type="Proteomes" id="UP000001983">
    <property type="component" value="Chromosome"/>
</dbReference>
<dbReference type="GO" id="GO:0005737">
    <property type="term" value="C:cytoplasm"/>
    <property type="evidence" value="ECO:0007669"/>
    <property type="project" value="UniProtKB-SubCell"/>
</dbReference>
<dbReference type="GO" id="GO:0005524">
    <property type="term" value="F:ATP binding"/>
    <property type="evidence" value="ECO:0007669"/>
    <property type="project" value="UniProtKB-UniRule"/>
</dbReference>
<dbReference type="GO" id="GO:0004594">
    <property type="term" value="F:pantothenate kinase activity"/>
    <property type="evidence" value="ECO:0007669"/>
    <property type="project" value="UniProtKB-UniRule"/>
</dbReference>
<dbReference type="GO" id="GO:0015937">
    <property type="term" value="P:coenzyme A biosynthetic process"/>
    <property type="evidence" value="ECO:0007669"/>
    <property type="project" value="UniProtKB-UniRule"/>
</dbReference>
<dbReference type="CDD" id="cd24015">
    <property type="entry name" value="ASKHA_NBD_PanK-III"/>
    <property type="match status" value="1"/>
</dbReference>
<dbReference type="Gene3D" id="3.30.420.40">
    <property type="match status" value="2"/>
</dbReference>
<dbReference type="HAMAP" id="MF_01274">
    <property type="entry name" value="Pantothen_kinase_3"/>
    <property type="match status" value="1"/>
</dbReference>
<dbReference type="InterPro" id="IPR043129">
    <property type="entry name" value="ATPase_NBD"/>
</dbReference>
<dbReference type="InterPro" id="IPR004619">
    <property type="entry name" value="Type_III_PanK"/>
</dbReference>
<dbReference type="NCBIfam" id="TIGR00671">
    <property type="entry name" value="baf"/>
    <property type="match status" value="1"/>
</dbReference>
<dbReference type="PANTHER" id="PTHR34265">
    <property type="entry name" value="TYPE III PANTOTHENATE KINASE"/>
    <property type="match status" value="1"/>
</dbReference>
<dbReference type="PANTHER" id="PTHR34265:SF1">
    <property type="entry name" value="TYPE III PANTOTHENATE KINASE"/>
    <property type="match status" value="1"/>
</dbReference>
<dbReference type="Pfam" id="PF03309">
    <property type="entry name" value="Pan_kinase"/>
    <property type="match status" value="1"/>
</dbReference>
<dbReference type="SUPFAM" id="SSF53067">
    <property type="entry name" value="Actin-like ATPase domain"/>
    <property type="match status" value="2"/>
</dbReference>
<proteinExistence type="inferred from homology"/>
<organism>
    <name type="scientific">Polaromonas sp. (strain JS666 / ATCC BAA-500)</name>
    <dbReference type="NCBI Taxonomy" id="296591"/>
    <lineage>
        <taxon>Bacteria</taxon>
        <taxon>Pseudomonadati</taxon>
        <taxon>Pseudomonadota</taxon>
        <taxon>Betaproteobacteria</taxon>
        <taxon>Burkholderiales</taxon>
        <taxon>Comamonadaceae</taxon>
        <taxon>Polaromonas</taxon>
    </lineage>
</organism>
<gene>
    <name evidence="1" type="primary">coaX</name>
    <name type="ordered locus">Bpro_4044</name>
</gene>